<sequence length="93" mass="10686">MPQHKSAEKRVRQSKRRNARNRVHKAEMKKLVKTVKGLIEKSAEKEEVENAYRAAIQKLDRMAVKGYLHKNNASNKKSKLSKLVNRFSKGDAA</sequence>
<protein>
    <recommendedName>
        <fullName evidence="1">Small ribosomal subunit protein bS20</fullName>
    </recommendedName>
    <alternativeName>
        <fullName evidence="3">30S ribosomal protein S20</fullName>
    </alternativeName>
</protein>
<comment type="function">
    <text evidence="1">Binds directly to 16S ribosomal RNA.</text>
</comment>
<comment type="similarity">
    <text evidence="1">Belongs to the bacterial ribosomal protein bS20 family.</text>
</comment>
<feature type="chain" id="PRO_1000126420" description="Small ribosomal subunit protein bS20">
    <location>
        <begin position="1"/>
        <end position="93"/>
    </location>
</feature>
<feature type="region of interest" description="Disordered" evidence="2">
    <location>
        <begin position="1"/>
        <end position="23"/>
    </location>
</feature>
<feature type="compositionally biased region" description="Basic and acidic residues" evidence="2">
    <location>
        <begin position="1"/>
        <end position="11"/>
    </location>
</feature>
<feature type="compositionally biased region" description="Basic residues" evidence="2">
    <location>
        <begin position="12"/>
        <end position="23"/>
    </location>
</feature>
<keyword id="KW-1185">Reference proteome</keyword>
<keyword id="KW-0687">Ribonucleoprotein</keyword>
<keyword id="KW-0689">Ribosomal protein</keyword>
<keyword id="KW-0694">RNA-binding</keyword>
<keyword id="KW-0699">rRNA-binding</keyword>
<accession>B3QVB0</accession>
<proteinExistence type="inferred from homology"/>
<gene>
    <name evidence="1" type="primary">rpsT</name>
    <name type="ordered locus">Ctha_0593</name>
</gene>
<name>RS20_CHLT3</name>
<reference key="1">
    <citation type="submission" date="2008-06" db="EMBL/GenBank/DDBJ databases">
        <title>Complete sequence of Chloroherpeton thalassium ATCC 35110.</title>
        <authorList>
            <consortium name="US DOE Joint Genome Institute"/>
            <person name="Lucas S."/>
            <person name="Copeland A."/>
            <person name="Lapidus A."/>
            <person name="Glavina del Rio T."/>
            <person name="Dalin E."/>
            <person name="Tice H."/>
            <person name="Bruce D."/>
            <person name="Goodwin L."/>
            <person name="Pitluck S."/>
            <person name="Schmutz J."/>
            <person name="Larimer F."/>
            <person name="Land M."/>
            <person name="Hauser L."/>
            <person name="Kyrpides N."/>
            <person name="Mikhailova N."/>
            <person name="Liu Z."/>
            <person name="Li T."/>
            <person name="Zhao F."/>
            <person name="Overmann J."/>
            <person name="Bryant D.A."/>
            <person name="Richardson P."/>
        </authorList>
    </citation>
    <scope>NUCLEOTIDE SEQUENCE [LARGE SCALE GENOMIC DNA]</scope>
    <source>
        <strain>ATCC 35110 / GB-78</strain>
    </source>
</reference>
<evidence type="ECO:0000255" key="1">
    <source>
        <dbReference type="HAMAP-Rule" id="MF_00500"/>
    </source>
</evidence>
<evidence type="ECO:0000256" key="2">
    <source>
        <dbReference type="SAM" id="MobiDB-lite"/>
    </source>
</evidence>
<evidence type="ECO:0000305" key="3"/>
<dbReference type="EMBL" id="CP001100">
    <property type="protein sequence ID" value="ACF13064.1"/>
    <property type="molecule type" value="Genomic_DNA"/>
</dbReference>
<dbReference type="RefSeq" id="WP_012499148.1">
    <property type="nucleotide sequence ID" value="NC_011026.1"/>
</dbReference>
<dbReference type="SMR" id="B3QVB0"/>
<dbReference type="STRING" id="517418.Ctha_0593"/>
<dbReference type="KEGG" id="cts:Ctha_0593"/>
<dbReference type="eggNOG" id="COG0268">
    <property type="taxonomic scope" value="Bacteria"/>
</dbReference>
<dbReference type="HOGENOM" id="CLU_160655_3_1_10"/>
<dbReference type="OrthoDB" id="9808392at2"/>
<dbReference type="Proteomes" id="UP000001208">
    <property type="component" value="Chromosome"/>
</dbReference>
<dbReference type="GO" id="GO:0005829">
    <property type="term" value="C:cytosol"/>
    <property type="evidence" value="ECO:0007669"/>
    <property type="project" value="TreeGrafter"/>
</dbReference>
<dbReference type="GO" id="GO:0015935">
    <property type="term" value="C:small ribosomal subunit"/>
    <property type="evidence" value="ECO:0007669"/>
    <property type="project" value="TreeGrafter"/>
</dbReference>
<dbReference type="GO" id="GO:0070181">
    <property type="term" value="F:small ribosomal subunit rRNA binding"/>
    <property type="evidence" value="ECO:0007669"/>
    <property type="project" value="TreeGrafter"/>
</dbReference>
<dbReference type="GO" id="GO:0003735">
    <property type="term" value="F:structural constituent of ribosome"/>
    <property type="evidence" value="ECO:0007669"/>
    <property type="project" value="InterPro"/>
</dbReference>
<dbReference type="GO" id="GO:0006412">
    <property type="term" value="P:translation"/>
    <property type="evidence" value="ECO:0007669"/>
    <property type="project" value="UniProtKB-UniRule"/>
</dbReference>
<dbReference type="Gene3D" id="1.20.58.110">
    <property type="entry name" value="Ribosomal protein S20"/>
    <property type="match status" value="1"/>
</dbReference>
<dbReference type="HAMAP" id="MF_00500">
    <property type="entry name" value="Ribosomal_bS20"/>
    <property type="match status" value="1"/>
</dbReference>
<dbReference type="InterPro" id="IPR002583">
    <property type="entry name" value="Ribosomal_bS20"/>
</dbReference>
<dbReference type="InterPro" id="IPR036510">
    <property type="entry name" value="Ribosomal_bS20_sf"/>
</dbReference>
<dbReference type="NCBIfam" id="TIGR00029">
    <property type="entry name" value="S20"/>
    <property type="match status" value="1"/>
</dbReference>
<dbReference type="PANTHER" id="PTHR33398">
    <property type="entry name" value="30S RIBOSOMAL PROTEIN S20"/>
    <property type="match status" value="1"/>
</dbReference>
<dbReference type="PANTHER" id="PTHR33398:SF1">
    <property type="entry name" value="SMALL RIBOSOMAL SUBUNIT PROTEIN BS20C"/>
    <property type="match status" value="1"/>
</dbReference>
<dbReference type="Pfam" id="PF01649">
    <property type="entry name" value="Ribosomal_S20p"/>
    <property type="match status" value="1"/>
</dbReference>
<dbReference type="SUPFAM" id="SSF46992">
    <property type="entry name" value="Ribosomal protein S20"/>
    <property type="match status" value="1"/>
</dbReference>
<organism>
    <name type="scientific">Chloroherpeton thalassium (strain ATCC 35110 / GB-78)</name>
    <dbReference type="NCBI Taxonomy" id="517418"/>
    <lineage>
        <taxon>Bacteria</taxon>
        <taxon>Pseudomonadati</taxon>
        <taxon>Chlorobiota</taxon>
        <taxon>Chlorobiia</taxon>
        <taxon>Chlorobiales</taxon>
        <taxon>Chloroherpetonaceae</taxon>
        <taxon>Chloroherpeton</taxon>
    </lineage>
</organism>